<organism>
    <name type="scientific">Oryza sativa subsp. japonica</name>
    <name type="common">Rice</name>
    <dbReference type="NCBI Taxonomy" id="39947"/>
    <lineage>
        <taxon>Eukaryota</taxon>
        <taxon>Viridiplantae</taxon>
        <taxon>Streptophyta</taxon>
        <taxon>Embryophyta</taxon>
        <taxon>Tracheophyta</taxon>
        <taxon>Spermatophyta</taxon>
        <taxon>Magnoliopsida</taxon>
        <taxon>Liliopsida</taxon>
        <taxon>Poales</taxon>
        <taxon>Poaceae</taxon>
        <taxon>BOP clade</taxon>
        <taxon>Oryzoideae</taxon>
        <taxon>Oryzeae</taxon>
        <taxon>Oryzinae</taxon>
        <taxon>Oryza</taxon>
        <taxon>Oryza sativa</taxon>
    </lineage>
</organism>
<name>PSA4C_ORYSJ</name>
<feature type="chain" id="PRO_0000436229" description="Proteasome subunit alpha type-4-3">
    <location>
        <begin position="1"/>
        <end position="250"/>
    </location>
</feature>
<accession>P0DKK4</accession>
<accession>A0A0P0WT26</accession>
<accession>P0C1G8</accession>
<accession>Q0DE56</accession>
<accession>Q9LE92</accession>
<accession>Q9XIZ9</accession>
<reference key="1">
    <citation type="journal article" date="2005" name="Nature">
        <title>The map-based sequence of the rice genome.</title>
        <authorList>
            <consortium name="International rice genome sequencing project (IRGSP)"/>
        </authorList>
    </citation>
    <scope>NUCLEOTIDE SEQUENCE [LARGE SCALE GENOMIC DNA]</scope>
    <source>
        <strain>cv. Nipponbare</strain>
    </source>
</reference>
<reference key="2">
    <citation type="journal article" date="2008" name="Nucleic Acids Res.">
        <title>The rice annotation project database (RAP-DB): 2008 update.</title>
        <authorList>
            <consortium name="The rice annotation project (RAP)"/>
        </authorList>
    </citation>
    <scope>GENOME REANNOTATION</scope>
    <source>
        <strain>cv. Nipponbare</strain>
    </source>
</reference>
<reference key="3">
    <citation type="journal article" date="2013" name="Rice">
        <title>Improvement of the Oryza sativa Nipponbare reference genome using next generation sequence and optical map data.</title>
        <authorList>
            <person name="Kawahara Y."/>
            <person name="de la Bastide M."/>
            <person name="Hamilton J.P."/>
            <person name="Kanamori H."/>
            <person name="McCombie W.R."/>
            <person name="Ouyang S."/>
            <person name="Schwartz D.C."/>
            <person name="Tanaka T."/>
            <person name="Wu J."/>
            <person name="Zhou S."/>
            <person name="Childs K.L."/>
            <person name="Davidson R.M."/>
            <person name="Lin H."/>
            <person name="Quesada-Ocampo L."/>
            <person name="Vaillancourt B."/>
            <person name="Sakai H."/>
            <person name="Lee S.S."/>
            <person name="Kim J."/>
            <person name="Numa H."/>
            <person name="Itoh T."/>
            <person name="Buell C.R."/>
            <person name="Matsumoto T."/>
        </authorList>
    </citation>
    <scope>GENOME REANNOTATION</scope>
    <source>
        <strain>cv. Nipponbare</strain>
    </source>
</reference>
<keyword id="KW-0963">Cytoplasm</keyword>
<keyword id="KW-0539">Nucleus</keyword>
<keyword id="KW-0647">Proteasome</keyword>
<keyword id="KW-1185">Reference proteome</keyword>
<comment type="function">
    <text>The proteasome is a multicatalytic proteinase complex which is characterized by its ability to cleave peptides with Arg, Phe, Tyr, Leu, and Glu adjacent to the leaving group at neutral or slightly basic pH. The proteasome has an ATP-dependent proteolytic activity.</text>
</comment>
<comment type="subunit">
    <text evidence="1">The 26S proteasome consists of a 20S proteasome core and two 19S regulatory subunits. The 20S proteasome core is composed of 28 subunits that are arranged in four stacked rings, resulting in a barrel-shaped structure. The two end rings are each formed by seven alpha subunits, and the two central rings are each formed by seven beta subunits. The catalytic chamber with the active sites is on the inside of the barrel (By similarity).</text>
</comment>
<comment type="subcellular location">
    <subcellularLocation>
        <location evidence="1">Cytoplasm</location>
    </subcellularLocation>
    <subcellularLocation>
        <location evidence="1">Nucleus</location>
    </subcellularLocation>
</comment>
<comment type="similarity">
    <text evidence="2">Belongs to the peptidase T1A family.</text>
</comment>
<sequence>MSRRYDSRTTIFSPEGRLYQVEYAMEAIGNAGSALGVLAADGVVLVGEKKVTSKLLQTSRSAEKMYKIDSHLACAVAGIMSDANILLNTARLHAQRYALSYQEPIPVEQLVQSLCDTKQGYTQFGGLRPFGVSFLFAGWDKHHGFQLYMSDPSGNYSGWKAAAVGANSQAAQSMLKQDYRDGMTREEAVALALKVLSKTMDSTSLTAEKLELAEVFLQPGTGEVQYQVCSPEAMGKLLAKAGLSQPAPEA</sequence>
<dbReference type="EMBL" id="AP002069">
    <property type="protein sequence ID" value="BAA95832.1"/>
    <property type="molecule type" value="Genomic_DNA"/>
</dbReference>
<dbReference type="EMBL" id="AP014962">
    <property type="protein sequence ID" value="BAS96428.1"/>
    <property type="molecule type" value="Genomic_DNA"/>
</dbReference>
<dbReference type="RefSeq" id="XP_015643487.1">
    <property type="nucleotide sequence ID" value="XM_015788001.1"/>
</dbReference>
<dbReference type="RefSeq" id="XP_015643524.1">
    <property type="nucleotide sequence ID" value="XM_015788038.1"/>
</dbReference>
<dbReference type="SMR" id="P0DKK4"/>
<dbReference type="FunCoup" id="P0DKK4">
    <property type="interactions" value="3266"/>
</dbReference>
<dbReference type="STRING" id="39947.P0DKK4"/>
<dbReference type="PaxDb" id="39947-P0DKK4"/>
<dbReference type="EnsemblPlants" id="Os06t0176000-01">
    <property type="protein sequence ID" value="Os06t0176000-01"/>
    <property type="gene ID" value="Os06g0176000"/>
</dbReference>
<dbReference type="EnsemblPlants" id="Os06t0177100-01">
    <property type="protein sequence ID" value="Os06t0177100-01"/>
    <property type="gene ID" value="Os06g0177100"/>
</dbReference>
<dbReference type="Gramene" id="Os06t0176000-01">
    <property type="protein sequence ID" value="Os06t0176000-01"/>
    <property type="gene ID" value="Os06g0176000"/>
</dbReference>
<dbReference type="Gramene" id="Os06t0177100-01">
    <property type="protein sequence ID" value="Os06t0177100-01"/>
    <property type="gene ID" value="Os06g0177100"/>
</dbReference>
<dbReference type="InParanoid" id="P0DKK4"/>
<dbReference type="OMA" id="YVLNDNM"/>
<dbReference type="OrthoDB" id="431557at2759"/>
<dbReference type="Proteomes" id="UP000000763">
    <property type="component" value="Chromosome 6"/>
</dbReference>
<dbReference type="Proteomes" id="UP000059680">
    <property type="component" value="Chromosome 6"/>
</dbReference>
<dbReference type="ExpressionAtlas" id="P0DKK4">
    <property type="expression patterns" value="baseline"/>
</dbReference>
<dbReference type="GO" id="GO:0005737">
    <property type="term" value="C:cytoplasm"/>
    <property type="evidence" value="ECO:0007669"/>
    <property type="project" value="UniProtKB-SubCell"/>
</dbReference>
<dbReference type="GO" id="GO:0005634">
    <property type="term" value="C:nucleus"/>
    <property type="evidence" value="ECO:0007669"/>
    <property type="project" value="UniProtKB-SubCell"/>
</dbReference>
<dbReference type="GO" id="GO:0019773">
    <property type="term" value="C:proteasome core complex, alpha-subunit complex"/>
    <property type="evidence" value="ECO:0007669"/>
    <property type="project" value="InterPro"/>
</dbReference>
<dbReference type="GO" id="GO:0006511">
    <property type="term" value="P:ubiquitin-dependent protein catabolic process"/>
    <property type="evidence" value="ECO:0007669"/>
    <property type="project" value="InterPro"/>
</dbReference>
<dbReference type="CDD" id="cd03752">
    <property type="entry name" value="proteasome_alpha_type_4"/>
    <property type="match status" value="1"/>
</dbReference>
<dbReference type="FunFam" id="3.60.20.10:FF:000031">
    <property type="entry name" value="Proteasome subunit alpha type"/>
    <property type="match status" value="1"/>
</dbReference>
<dbReference type="Gene3D" id="3.60.20.10">
    <property type="entry name" value="Glutamine Phosphoribosylpyrophosphate, subunit 1, domain 1"/>
    <property type="match status" value="1"/>
</dbReference>
<dbReference type="InterPro" id="IPR029055">
    <property type="entry name" value="Ntn_hydrolases_N"/>
</dbReference>
<dbReference type="InterPro" id="IPR050115">
    <property type="entry name" value="Proteasome_alpha"/>
</dbReference>
<dbReference type="InterPro" id="IPR023332">
    <property type="entry name" value="Proteasome_alpha-type"/>
</dbReference>
<dbReference type="InterPro" id="IPR000426">
    <property type="entry name" value="Proteasome_asu_N"/>
</dbReference>
<dbReference type="InterPro" id="IPR001353">
    <property type="entry name" value="Proteasome_sua/b"/>
</dbReference>
<dbReference type="NCBIfam" id="NF003075">
    <property type="entry name" value="PRK03996.1"/>
    <property type="match status" value="1"/>
</dbReference>
<dbReference type="PANTHER" id="PTHR11599">
    <property type="entry name" value="PROTEASOME SUBUNIT ALPHA/BETA"/>
    <property type="match status" value="1"/>
</dbReference>
<dbReference type="Pfam" id="PF00227">
    <property type="entry name" value="Proteasome"/>
    <property type="match status" value="1"/>
</dbReference>
<dbReference type="Pfam" id="PF10584">
    <property type="entry name" value="Proteasome_A_N"/>
    <property type="match status" value="1"/>
</dbReference>
<dbReference type="SMART" id="SM00948">
    <property type="entry name" value="Proteasome_A_N"/>
    <property type="match status" value="1"/>
</dbReference>
<dbReference type="SUPFAM" id="SSF56235">
    <property type="entry name" value="N-terminal nucleophile aminohydrolases (Ntn hydrolases)"/>
    <property type="match status" value="1"/>
</dbReference>
<dbReference type="PROSITE" id="PS00388">
    <property type="entry name" value="PROTEASOME_ALPHA_1"/>
    <property type="match status" value="1"/>
</dbReference>
<dbReference type="PROSITE" id="PS51475">
    <property type="entry name" value="PROTEASOME_ALPHA_2"/>
    <property type="match status" value="1"/>
</dbReference>
<protein>
    <recommendedName>
        <fullName>Proteasome subunit alpha type-4-3</fullName>
    </recommendedName>
    <alternativeName>
        <fullName>20S proteasome alpha subunit C</fullName>
    </alternativeName>
    <alternativeName>
        <fullName>20S proteasome subunit alpha-3</fullName>
    </alternativeName>
</protein>
<evidence type="ECO:0000250" key="1"/>
<evidence type="ECO:0000255" key="2">
    <source>
        <dbReference type="PROSITE-ProRule" id="PRU00808"/>
    </source>
</evidence>
<evidence type="ECO:0000305" key="3"/>
<evidence type="ECO:0000312" key="4">
    <source>
        <dbReference type="EMBL" id="BAS96428.1"/>
    </source>
</evidence>
<gene>
    <name evidence="4" type="ordered locus">Os06g0177100</name>
    <name evidence="3" type="ordered locus">LOC_Os06g07978</name>
    <name type="ORF">P0015E04.34</name>
</gene>
<proteinExistence type="inferred from homology"/>